<accession>Q9Z968</accession>
<accession>Q9JQ97</accession>
<keyword id="KW-0963">Cytoplasm</keyword>
<keyword id="KW-0488">Methylation</keyword>
<keyword id="KW-0648">Protein biosynthesis</keyword>
<protein>
    <recommendedName>
        <fullName>Peptide chain release factor 1</fullName>
        <shortName>RF-1</shortName>
    </recommendedName>
</protein>
<proteinExistence type="inferred from homology"/>
<reference key="1">
    <citation type="journal article" date="1999" name="Nat. Genet.">
        <title>Comparative genomes of Chlamydia pneumoniae and C. trachomatis.</title>
        <authorList>
            <person name="Kalman S."/>
            <person name="Mitchell W.P."/>
            <person name="Marathe R."/>
            <person name="Lammel C.J."/>
            <person name="Fan J."/>
            <person name="Hyman R.W."/>
            <person name="Olinger L."/>
            <person name="Grimwood J."/>
            <person name="Davis R.W."/>
            <person name="Stephens R.S."/>
        </authorList>
    </citation>
    <scope>NUCLEOTIDE SEQUENCE [LARGE SCALE GENOMIC DNA]</scope>
    <source>
        <strain>CWL029</strain>
    </source>
</reference>
<reference key="2">
    <citation type="journal article" date="2000" name="Nucleic Acids Res.">
        <title>Genome sequences of Chlamydia trachomatis MoPn and Chlamydia pneumoniae AR39.</title>
        <authorList>
            <person name="Read T.D."/>
            <person name="Brunham R.C."/>
            <person name="Shen C."/>
            <person name="Gill S.R."/>
            <person name="Heidelberg J.F."/>
            <person name="White O."/>
            <person name="Hickey E.K."/>
            <person name="Peterson J.D."/>
            <person name="Utterback T.R."/>
            <person name="Berry K.J."/>
            <person name="Bass S."/>
            <person name="Linher K.D."/>
            <person name="Weidman J.F."/>
            <person name="Khouri H.M."/>
            <person name="Craven B."/>
            <person name="Bowman C."/>
            <person name="Dodson R.J."/>
            <person name="Gwinn M.L."/>
            <person name="Nelson W.C."/>
            <person name="DeBoy R.T."/>
            <person name="Kolonay J.F."/>
            <person name="McClarty G."/>
            <person name="Salzberg S.L."/>
            <person name="Eisen J.A."/>
            <person name="Fraser C.M."/>
        </authorList>
    </citation>
    <scope>NUCLEOTIDE SEQUENCE [LARGE SCALE GENOMIC DNA]</scope>
    <source>
        <strain>AR39</strain>
    </source>
</reference>
<reference key="3">
    <citation type="journal article" date="2000" name="Nucleic Acids Res.">
        <title>Comparison of whole genome sequences of Chlamydia pneumoniae J138 from Japan and CWL029 from USA.</title>
        <authorList>
            <person name="Shirai M."/>
            <person name="Hirakawa H."/>
            <person name="Kimoto M."/>
            <person name="Tabuchi M."/>
            <person name="Kishi F."/>
            <person name="Ouchi K."/>
            <person name="Shiba T."/>
            <person name="Ishii K."/>
            <person name="Hattori M."/>
            <person name="Kuhara S."/>
            <person name="Nakazawa T."/>
        </authorList>
    </citation>
    <scope>NUCLEOTIDE SEQUENCE [LARGE SCALE GENOMIC DNA]</scope>
    <source>
        <strain>J138</strain>
    </source>
</reference>
<reference key="4">
    <citation type="submission" date="2002-05" db="EMBL/GenBank/DDBJ databases">
        <title>The genome sequence of Chlamydia pneumoniae TW183 and comparison with other Chlamydia strains based on whole genome sequence analysis.</title>
        <authorList>
            <person name="Geng M.M."/>
            <person name="Schuhmacher A."/>
            <person name="Muehldorfer I."/>
            <person name="Bensch K.W."/>
            <person name="Schaefer K.P."/>
            <person name="Schneider S."/>
            <person name="Pohl T."/>
            <person name="Essig A."/>
            <person name="Marre R."/>
            <person name="Melchers K."/>
        </authorList>
    </citation>
    <scope>NUCLEOTIDE SEQUENCE [LARGE SCALE GENOMIC DNA]</scope>
    <source>
        <strain>TW-183</strain>
    </source>
</reference>
<evidence type="ECO:0000250" key="1"/>
<evidence type="ECO:0000256" key="2">
    <source>
        <dbReference type="SAM" id="MobiDB-lite"/>
    </source>
</evidence>
<evidence type="ECO:0000305" key="3"/>
<name>RF1_CHLPN</name>
<gene>
    <name type="primary">prfA</name>
    <name type="ordered locus">CPn_0113</name>
    <name type="ordered locus">CP_0660</name>
    <name type="ordered locus">CpB0114</name>
</gene>
<feature type="chain" id="PRO_0000177656" description="Peptide chain release factor 1">
    <location>
        <begin position="1"/>
        <end position="357"/>
    </location>
</feature>
<feature type="region of interest" description="Disordered" evidence="2">
    <location>
        <begin position="285"/>
        <end position="305"/>
    </location>
</feature>
<feature type="modified residue" description="N5-methylglutamine" evidence="1">
    <location>
        <position position="235"/>
    </location>
</feature>
<organism>
    <name type="scientific">Chlamydia pneumoniae</name>
    <name type="common">Chlamydophila pneumoniae</name>
    <dbReference type="NCBI Taxonomy" id="83558"/>
    <lineage>
        <taxon>Bacteria</taxon>
        <taxon>Pseudomonadati</taxon>
        <taxon>Chlamydiota</taxon>
        <taxon>Chlamydiia</taxon>
        <taxon>Chlamydiales</taxon>
        <taxon>Chlamydiaceae</taxon>
        <taxon>Chlamydia/Chlamydophila group</taxon>
        <taxon>Chlamydia</taxon>
    </lineage>
</organism>
<comment type="function">
    <text evidence="1">Peptide chain release factor 1 directs the termination of translation in response to the peptide chain termination codons UAG and UAA.</text>
</comment>
<comment type="subcellular location">
    <subcellularLocation>
        <location evidence="1">Cytoplasm</location>
    </subcellularLocation>
</comment>
<comment type="PTM">
    <text evidence="1">Methylated by PrmC. Methylation increases the termination efficiency of RF1 (By similarity).</text>
</comment>
<comment type="similarity">
    <text evidence="3">Belongs to the prokaryotic/mitochondrial release factor family.</text>
</comment>
<sequence>MKKKVAEYLNRLAEVEIKISNPEIFSNSKEYSALSKEHSYLLELKNAYDKILNLEKVLADDKQALAIEKDPEMVVMLEEGINENKVELEKLNKILESLLVPPDPDDDLNVIMELRAGTGGEEAALFVGDCVRMYHLYASSKGWKYEVLSASESDLKGYKEYVMGISGTGVKRLLQYEAGTHRVQRVPETETQGRVHTSAITIAVLPEPSEEDTELLINEKDLKIDTFRASGAGGQHVNVTDSAVRITHLPTGVVVTCQDERSQHKNKDKAMRILKARIRDAEMQKRHNEASAMRSAQVGSGDRSERIRTYNFSQNRVTDHRIGLTLYNLDKVMEGDLDPITTAMVSHAYHQLLEHGN</sequence>
<dbReference type="EMBL" id="AE001363">
    <property type="protein sequence ID" value="AAD18266.1"/>
    <property type="molecule type" value="Genomic_DNA"/>
</dbReference>
<dbReference type="EMBL" id="AE002161">
    <property type="protein sequence ID" value="AAF38472.1"/>
    <property type="molecule type" value="Genomic_DNA"/>
</dbReference>
<dbReference type="EMBL" id="BA000008">
    <property type="protein sequence ID" value="BAA98324.1"/>
    <property type="molecule type" value="Genomic_DNA"/>
</dbReference>
<dbReference type="EMBL" id="AE009440">
    <property type="protein sequence ID" value="AAP98047.1"/>
    <property type="molecule type" value="Genomic_DNA"/>
</dbReference>
<dbReference type="PIR" id="B86505">
    <property type="entry name" value="B86505"/>
</dbReference>
<dbReference type="PIR" id="G72116">
    <property type="entry name" value="G72116"/>
</dbReference>
<dbReference type="RefSeq" id="NP_224321.1">
    <property type="nucleotide sequence ID" value="NC_000922.1"/>
</dbReference>
<dbReference type="RefSeq" id="WP_010882763.1">
    <property type="nucleotide sequence ID" value="NZ_LN847257.1"/>
</dbReference>
<dbReference type="SMR" id="Q9Z968"/>
<dbReference type="STRING" id="406984.CPK_ORF00625"/>
<dbReference type="GeneID" id="45050158"/>
<dbReference type="KEGG" id="cpa:CP_0660"/>
<dbReference type="KEGG" id="cpj:pfrA"/>
<dbReference type="KEGG" id="cpn:CPn_0113"/>
<dbReference type="KEGG" id="cpt:CpB0114"/>
<dbReference type="PATRIC" id="fig|115713.3.peg.128"/>
<dbReference type="eggNOG" id="COG0216">
    <property type="taxonomic scope" value="Bacteria"/>
</dbReference>
<dbReference type="HOGENOM" id="CLU_036856_0_1_0"/>
<dbReference type="OMA" id="DHRVGFK"/>
<dbReference type="OrthoDB" id="9806673at2"/>
<dbReference type="Proteomes" id="UP000000583">
    <property type="component" value="Chromosome"/>
</dbReference>
<dbReference type="Proteomes" id="UP000000801">
    <property type="component" value="Chromosome"/>
</dbReference>
<dbReference type="GO" id="GO:0005737">
    <property type="term" value="C:cytoplasm"/>
    <property type="evidence" value="ECO:0007669"/>
    <property type="project" value="UniProtKB-SubCell"/>
</dbReference>
<dbReference type="GO" id="GO:0016149">
    <property type="term" value="F:translation release factor activity, codon specific"/>
    <property type="evidence" value="ECO:0007669"/>
    <property type="project" value="UniProtKB-UniRule"/>
</dbReference>
<dbReference type="FunFam" id="3.30.160.20:FF:000004">
    <property type="entry name" value="Peptide chain release factor 1"/>
    <property type="match status" value="1"/>
</dbReference>
<dbReference type="FunFam" id="3.30.70.1660:FF:000002">
    <property type="entry name" value="Peptide chain release factor 1"/>
    <property type="match status" value="1"/>
</dbReference>
<dbReference type="FunFam" id="3.30.70.1660:FF:000004">
    <property type="entry name" value="Peptide chain release factor 1"/>
    <property type="match status" value="1"/>
</dbReference>
<dbReference type="Gene3D" id="3.30.160.20">
    <property type="match status" value="1"/>
</dbReference>
<dbReference type="Gene3D" id="3.30.70.1660">
    <property type="match status" value="2"/>
</dbReference>
<dbReference type="Gene3D" id="6.10.140.1950">
    <property type="match status" value="1"/>
</dbReference>
<dbReference type="HAMAP" id="MF_00093">
    <property type="entry name" value="Rel_fac_1"/>
    <property type="match status" value="1"/>
</dbReference>
<dbReference type="InterPro" id="IPR005139">
    <property type="entry name" value="PCRF"/>
</dbReference>
<dbReference type="InterPro" id="IPR000352">
    <property type="entry name" value="Pep_chain_release_fac_I"/>
</dbReference>
<dbReference type="InterPro" id="IPR045853">
    <property type="entry name" value="Pep_chain_release_fac_I_sf"/>
</dbReference>
<dbReference type="InterPro" id="IPR050057">
    <property type="entry name" value="Prokaryotic/Mito_RF"/>
</dbReference>
<dbReference type="InterPro" id="IPR004373">
    <property type="entry name" value="RF-1"/>
</dbReference>
<dbReference type="NCBIfam" id="TIGR00019">
    <property type="entry name" value="prfA"/>
    <property type="match status" value="1"/>
</dbReference>
<dbReference type="NCBIfam" id="NF001859">
    <property type="entry name" value="PRK00591.1"/>
    <property type="match status" value="1"/>
</dbReference>
<dbReference type="PANTHER" id="PTHR43804">
    <property type="entry name" value="LD18447P"/>
    <property type="match status" value="1"/>
</dbReference>
<dbReference type="PANTHER" id="PTHR43804:SF7">
    <property type="entry name" value="LD18447P"/>
    <property type="match status" value="1"/>
</dbReference>
<dbReference type="Pfam" id="PF03462">
    <property type="entry name" value="PCRF"/>
    <property type="match status" value="1"/>
</dbReference>
<dbReference type="Pfam" id="PF00472">
    <property type="entry name" value="RF-1"/>
    <property type="match status" value="1"/>
</dbReference>
<dbReference type="SMART" id="SM00937">
    <property type="entry name" value="PCRF"/>
    <property type="match status" value="1"/>
</dbReference>
<dbReference type="SUPFAM" id="SSF75620">
    <property type="entry name" value="Release factor"/>
    <property type="match status" value="1"/>
</dbReference>
<dbReference type="PROSITE" id="PS00745">
    <property type="entry name" value="RF_PROK_I"/>
    <property type="match status" value="1"/>
</dbReference>